<keyword id="KW-0012">Acyltransferase</keyword>
<keyword id="KW-0414">Isoprene biosynthesis</keyword>
<keyword id="KW-0808">Transferase</keyword>
<protein>
    <recommendedName>
        <fullName evidence="1">Hydroxymethylglutaryl-CoA synthase</fullName>
        <shortName evidence="1">HMG-CoA synthase</shortName>
        <shortName evidence="1">HMGCS</shortName>
        <ecNumber evidence="1">2.3.3.10</ecNumber>
    </recommendedName>
</protein>
<comment type="function">
    <text evidence="1">Catalyzes the condensation of acetyl-CoA with acetoacetyl-CoA to form 3-hydroxy-3-methylglutaryl-CoA (HMG-CoA). Functions in the mevalonate (MVA) pathway leading to isopentenyl diphosphate (IPP), a key precursor for the biosynthesis of isoprenoid compounds that are building blocks of archaeal membrane lipids.</text>
</comment>
<comment type="catalytic activity">
    <reaction evidence="1">
        <text>acetoacetyl-CoA + acetyl-CoA + H2O = (3S)-3-hydroxy-3-methylglutaryl-CoA + CoA + H(+)</text>
        <dbReference type="Rhea" id="RHEA:10188"/>
        <dbReference type="ChEBI" id="CHEBI:15377"/>
        <dbReference type="ChEBI" id="CHEBI:15378"/>
        <dbReference type="ChEBI" id="CHEBI:43074"/>
        <dbReference type="ChEBI" id="CHEBI:57286"/>
        <dbReference type="ChEBI" id="CHEBI:57287"/>
        <dbReference type="ChEBI" id="CHEBI:57288"/>
        <dbReference type="EC" id="2.3.3.10"/>
    </reaction>
    <physiologicalReaction direction="left-to-right" evidence="1">
        <dbReference type="Rhea" id="RHEA:10189"/>
    </physiologicalReaction>
</comment>
<comment type="pathway">
    <text evidence="1">Metabolic intermediate biosynthesis; (R)-mevalonate biosynthesis; (R)-mevalonate from acetyl-CoA: step 2/3.</text>
</comment>
<comment type="subunit">
    <text evidence="1">Interacts with acetoacetyl-CoA thiolase that catalyzes the precedent step in the pathway and with a DUF35 protein. The acetoacetyl-CoA thiolase/HMG-CoA synthase complex channels the intermediate via a fused CoA-binding site, which allows for efficient coupling of the endergonic thiolase reaction with the exergonic HMGCS reaction.</text>
</comment>
<comment type="similarity">
    <text evidence="1">Belongs to the thiolase-like superfamily. Archaeal HMG-CoA synthase family.</text>
</comment>
<organism>
    <name type="scientific">Methanococcus maripaludis (strain C5 / ATCC BAA-1333)</name>
    <dbReference type="NCBI Taxonomy" id="402880"/>
    <lineage>
        <taxon>Archaea</taxon>
        <taxon>Methanobacteriati</taxon>
        <taxon>Methanobacteriota</taxon>
        <taxon>Methanomada group</taxon>
        <taxon>Methanococci</taxon>
        <taxon>Methanococcales</taxon>
        <taxon>Methanococcaceae</taxon>
        <taxon>Methanococcus</taxon>
    </lineage>
</organism>
<name>HMGCS_METM5</name>
<dbReference type="EC" id="2.3.3.10" evidence="1"/>
<dbReference type="EMBL" id="CP000609">
    <property type="protein sequence ID" value="ABO34695.1"/>
    <property type="molecule type" value="Genomic_DNA"/>
</dbReference>
<dbReference type="RefSeq" id="WP_011868150.1">
    <property type="nucleotide sequence ID" value="NC_009135.1"/>
</dbReference>
<dbReference type="SMR" id="A4FWW6"/>
<dbReference type="STRING" id="402880.MmarC5_0379"/>
<dbReference type="GeneID" id="4928626"/>
<dbReference type="KEGG" id="mmq:MmarC5_0379"/>
<dbReference type="eggNOG" id="arCOG01767">
    <property type="taxonomic scope" value="Archaea"/>
</dbReference>
<dbReference type="HOGENOM" id="CLU_039592_7_0_2"/>
<dbReference type="OrthoDB" id="5812at2157"/>
<dbReference type="UniPathway" id="UPA00058">
    <property type="reaction ID" value="UER00102"/>
</dbReference>
<dbReference type="Proteomes" id="UP000000253">
    <property type="component" value="Chromosome"/>
</dbReference>
<dbReference type="GO" id="GO:0003985">
    <property type="term" value="F:acetyl-CoA C-acetyltransferase activity"/>
    <property type="evidence" value="ECO:0007669"/>
    <property type="project" value="UniProtKB-UniRule"/>
</dbReference>
<dbReference type="GO" id="GO:0004421">
    <property type="term" value="F:hydroxymethylglutaryl-CoA synthase activity"/>
    <property type="evidence" value="ECO:0007669"/>
    <property type="project" value="InterPro"/>
</dbReference>
<dbReference type="GO" id="GO:0010142">
    <property type="term" value="P:farnesyl diphosphate biosynthetic process, mevalonate pathway"/>
    <property type="evidence" value="ECO:0007669"/>
    <property type="project" value="TreeGrafter"/>
</dbReference>
<dbReference type="GO" id="GO:0019287">
    <property type="term" value="P:isopentenyl diphosphate biosynthetic process, mevalonate pathway"/>
    <property type="evidence" value="ECO:0007669"/>
    <property type="project" value="UniProtKB-UniRule"/>
</dbReference>
<dbReference type="CDD" id="cd00827">
    <property type="entry name" value="init_cond_enzymes"/>
    <property type="match status" value="1"/>
</dbReference>
<dbReference type="Gene3D" id="3.40.47.10">
    <property type="match status" value="1"/>
</dbReference>
<dbReference type="HAMAP" id="MF_01409">
    <property type="entry name" value="HMG_CoA_synth_arch"/>
    <property type="match status" value="1"/>
</dbReference>
<dbReference type="InterPro" id="IPR013747">
    <property type="entry name" value="ACP_syn_III_C"/>
</dbReference>
<dbReference type="InterPro" id="IPR004656">
    <property type="entry name" value="HMG_CoA_Synthase"/>
</dbReference>
<dbReference type="InterPro" id="IPR016039">
    <property type="entry name" value="Thiolase-like"/>
</dbReference>
<dbReference type="NCBIfam" id="TIGR00748">
    <property type="entry name" value="HMG_CoA_syn_Arc"/>
    <property type="match status" value="1"/>
</dbReference>
<dbReference type="NCBIfam" id="NF003274">
    <property type="entry name" value="PRK04262.1"/>
    <property type="match status" value="1"/>
</dbReference>
<dbReference type="PANTHER" id="PTHR43323">
    <property type="entry name" value="3-HYDROXY-3-METHYLGLUTARYL COENZYME A SYNTHASE"/>
    <property type="match status" value="1"/>
</dbReference>
<dbReference type="PANTHER" id="PTHR43323:SF2">
    <property type="entry name" value="HYDROXYMETHYLGLUTARYL-COA SYNTHASE"/>
    <property type="match status" value="1"/>
</dbReference>
<dbReference type="Pfam" id="PF08541">
    <property type="entry name" value="ACP_syn_III_C"/>
    <property type="match status" value="1"/>
</dbReference>
<dbReference type="SUPFAM" id="SSF53901">
    <property type="entry name" value="Thiolase-like"/>
    <property type="match status" value="2"/>
</dbReference>
<sequence>MKEVGIVGYGSDLPKYRIKAEDIAGAWGKDAQAIKRGLVVNEKSVPGPDEDTATISVQAARRALSRAGINPKDIGAVYVGSESHPYAVKPTSGIVAEACGVSPDFTAADLEFACKAGTAGMQMCMGLVGSEMMEYAMAVGADTAQGAPGDALEYTAAAGGAAYIIGAKKEEFIAKFNGTYSYTTDTPDFWRREHEHYPKHGGRFTGEPAYFKHVLNGAKGMMAKMDTTAKDYDYCVFHQPNGKFYISAAKQLGFTEEQYKYGLLTPYLGNTYSGAVPLGLSNILDHAKADDRIFVVSYGSGAGSDAFDITVSDRISEVVDKEITTEKLLESKKYVDYAVYLKYRGKIRM</sequence>
<proteinExistence type="inferred from homology"/>
<gene>
    <name type="ordered locus">MmarC5_0379</name>
</gene>
<evidence type="ECO:0000255" key="1">
    <source>
        <dbReference type="HAMAP-Rule" id="MF_01409"/>
    </source>
</evidence>
<accession>A4FWW6</accession>
<feature type="chain" id="PRO_1000068441" description="Hydroxymethylglutaryl-CoA synthase">
    <location>
        <begin position="1"/>
        <end position="349"/>
    </location>
</feature>
<feature type="active site" description="Proton donor/acceptor" evidence="1">
    <location>
        <position position="82"/>
    </location>
</feature>
<feature type="active site" description="Acyl-thioester intermediate" evidence="1">
    <location>
        <position position="114"/>
    </location>
</feature>
<feature type="active site" description="Proton donor/acceptor" evidence="1">
    <location>
        <position position="238"/>
    </location>
</feature>
<feature type="binding site" evidence="1">
    <location>
        <position position="30"/>
    </location>
    <ligand>
        <name>(3S)-3-hydroxy-3-methylglutaryl-CoA</name>
        <dbReference type="ChEBI" id="CHEBI:43074"/>
    </ligand>
</feature>
<feature type="binding site" evidence="1">
    <location>
        <position position="31"/>
    </location>
    <ligand>
        <name>(3S)-3-hydroxy-3-methylglutaryl-CoA</name>
        <dbReference type="ChEBI" id="CHEBI:43074"/>
    </ligand>
</feature>
<feature type="binding site" evidence="1">
    <location>
        <position position="114"/>
    </location>
    <ligand>
        <name>(3S)-3-hydroxy-3-methylglutaryl-CoA</name>
        <dbReference type="ChEBI" id="CHEBI:43074"/>
    </ligand>
</feature>
<feature type="binding site" evidence="1">
    <location>
        <position position="155"/>
    </location>
    <ligand>
        <name>(3S)-3-hydroxy-3-methylglutaryl-CoA</name>
        <dbReference type="ChEBI" id="CHEBI:43074"/>
    </ligand>
</feature>
<feature type="binding site" evidence="1">
    <location>
        <position position="203"/>
    </location>
    <ligand>
        <name>CoA</name>
        <dbReference type="ChEBI" id="CHEBI:57287"/>
        <note>ligand shared with acetoacetyl-CoA thiolase</note>
    </ligand>
</feature>
<feature type="binding site" evidence="1">
    <location>
        <position position="205"/>
    </location>
    <ligand>
        <name>(3S)-3-hydroxy-3-methylglutaryl-CoA</name>
        <dbReference type="ChEBI" id="CHEBI:43074"/>
    </ligand>
</feature>
<feature type="binding site" evidence="1">
    <location>
        <position position="238"/>
    </location>
    <ligand>
        <name>(3S)-3-hydroxy-3-methylglutaryl-CoA</name>
        <dbReference type="ChEBI" id="CHEBI:43074"/>
    </ligand>
</feature>
<feature type="binding site" evidence="1">
    <location>
        <position position="243"/>
    </location>
    <ligand>
        <name>CoA</name>
        <dbReference type="ChEBI" id="CHEBI:57287"/>
        <note>ligand shared with acetoacetyl-CoA thiolase</note>
    </ligand>
</feature>
<feature type="binding site" evidence="1">
    <location>
        <position position="270"/>
    </location>
    <ligand>
        <name>(3S)-3-hydroxy-3-methylglutaryl-CoA</name>
        <dbReference type="ChEBI" id="CHEBI:43074"/>
    </ligand>
</feature>
<feature type="binding site" evidence="1">
    <location>
        <position position="300"/>
    </location>
    <ligand>
        <name>(3S)-3-hydroxy-3-methylglutaryl-CoA</name>
        <dbReference type="ChEBI" id="CHEBI:43074"/>
    </ligand>
</feature>
<reference key="1">
    <citation type="submission" date="2007-03" db="EMBL/GenBank/DDBJ databases">
        <title>Complete sequence of chromosome of Methanococcus maripaludis C5.</title>
        <authorList>
            <consortium name="US DOE Joint Genome Institute"/>
            <person name="Copeland A."/>
            <person name="Lucas S."/>
            <person name="Lapidus A."/>
            <person name="Barry K."/>
            <person name="Glavina del Rio T."/>
            <person name="Dalin E."/>
            <person name="Tice H."/>
            <person name="Pitluck S."/>
            <person name="Chertkov O."/>
            <person name="Brettin T."/>
            <person name="Bruce D."/>
            <person name="Han C."/>
            <person name="Detter J.C."/>
            <person name="Schmutz J."/>
            <person name="Larimer F."/>
            <person name="Land M."/>
            <person name="Hauser L."/>
            <person name="Kyrpides N."/>
            <person name="Mikhailova N."/>
            <person name="Sieprawska-Lupa M."/>
            <person name="Whitman W.B."/>
            <person name="Richardson P."/>
        </authorList>
    </citation>
    <scope>NUCLEOTIDE SEQUENCE [LARGE SCALE GENOMIC DNA]</scope>
    <source>
        <strain>C5 / ATCC BAA-1333</strain>
    </source>
</reference>